<evidence type="ECO:0000250" key="1"/>
<evidence type="ECO:0000305" key="2"/>
<organism>
    <name type="scientific">Mycobacterium tuberculosis (strain CDC 1551 / Oshkosh)</name>
    <dbReference type="NCBI Taxonomy" id="83331"/>
    <lineage>
        <taxon>Bacteria</taxon>
        <taxon>Bacillati</taxon>
        <taxon>Actinomycetota</taxon>
        <taxon>Actinomycetes</taxon>
        <taxon>Mycobacteriales</taxon>
        <taxon>Mycobacteriaceae</taxon>
        <taxon>Mycobacterium</taxon>
        <taxon>Mycobacterium tuberculosis complex</taxon>
    </lineage>
</organism>
<sequence>MSETPRLLFVHAHPDDESLSNGATIAHYTSRGAQVHVVTCTLGEEGEVIGDRWAQLTADHADQLGGYRIGELTAALRALGVSAPIYLGGAGRWRDSGMAGTDQRSQRRFVDADPRQTVGALVAIIRELRPHVVVTYDPNGGYGHPDHVHTHTVTTAAVAAAGVGSGTADHPGDPWTVPKFYWTVLGLSALISGARALVPDDLRPEWVLPRADEIAFGYSDDGIDAVVEADEQARAAKVAALAAHATQVVVGPTGRAAALSNNLALPILADEHYVLAGGSAGARDERGWETDLLAGLGFTASGT</sequence>
<reference key="1">
    <citation type="journal article" date="2002" name="J. Bacteriol.">
        <title>Whole-genome comparison of Mycobacterium tuberculosis clinical and laboratory strains.</title>
        <authorList>
            <person name="Fleischmann R.D."/>
            <person name="Alland D."/>
            <person name="Eisen J.A."/>
            <person name="Carpenter L."/>
            <person name="White O."/>
            <person name="Peterson J.D."/>
            <person name="DeBoy R.T."/>
            <person name="Dodson R.J."/>
            <person name="Gwinn M.L."/>
            <person name="Haft D.H."/>
            <person name="Hickey E.K."/>
            <person name="Kolonay J.F."/>
            <person name="Nelson W.C."/>
            <person name="Umayam L.A."/>
            <person name="Ermolaeva M.D."/>
            <person name="Salzberg S.L."/>
            <person name="Delcher A."/>
            <person name="Utterback T.R."/>
            <person name="Weidman J.F."/>
            <person name="Khouri H.M."/>
            <person name="Gill J."/>
            <person name="Mikula A."/>
            <person name="Bishai W."/>
            <person name="Jacobs W.R. Jr."/>
            <person name="Venter J.C."/>
            <person name="Fraser C.M."/>
        </authorList>
    </citation>
    <scope>NUCLEOTIDE SEQUENCE [LARGE SCALE GENOMIC DNA]</scope>
    <source>
        <strain>CDC 1551 / Oshkosh</strain>
    </source>
</reference>
<accession>P9WJN2</accession>
<accession>L0T5W7</accession>
<accession>O50426</accession>
<accession>Q7D8Q0</accession>
<comment type="function">
    <text evidence="1">Catalyzes the deacetylation of 1D-myo-inositol 2-acetamido-2-deoxy-alpha-D-glucopyranoside (GlcNAc-Ins) in the mycothiol (MSH) biosynthesis pathway. Shows some amidase activity toward S-conjugates of mycothiol (By similarity).</text>
</comment>
<comment type="catalytic activity">
    <reaction>
        <text>1D-myo-inositol 2-acetamido-2-deoxy-alpha-D-glucopyranoside + H2O = 1D-myo-inositol 2-amino-2-deoxy-alpha-D-glucopyranoside + acetate</text>
        <dbReference type="Rhea" id="RHEA:26180"/>
        <dbReference type="ChEBI" id="CHEBI:15377"/>
        <dbReference type="ChEBI" id="CHEBI:30089"/>
        <dbReference type="ChEBI" id="CHEBI:52442"/>
        <dbReference type="ChEBI" id="CHEBI:58886"/>
        <dbReference type="EC" id="3.5.1.103"/>
    </reaction>
</comment>
<comment type="cofactor">
    <cofactor evidence="1">
        <name>Zn(2+)</name>
        <dbReference type="ChEBI" id="CHEBI:29105"/>
    </cofactor>
    <text evidence="1">Binds 1 zinc ion per subunit.</text>
</comment>
<comment type="subunit">
    <text evidence="1">Homodimer.</text>
</comment>
<comment type="similarity">
    <text evidence="2">Belongs to the MshB deacetylase family.</text>
</comment>
<keyword id="KW-0378">Hydrolase</keyword>
<keyword id="KW-0479">Metal-binding</keyword>
<keyword id="KW-1185">Reference proteome</keyword>
<keyword id="KW-0862">Zinc</keyword>
<dbReference type="EC" id="3.5.1.103"/>
<dbReference type="EMBL" id="AE000516">
    <property type="protein sequence ID" value="AAK45464.1"/>
    <property type="molecule type" value="Genomic_DNA"/>
</dbReference>
<dbReference type="PIR" id="B70875">
    <property type="entry name" value="B70875"/>
</dbReference>
<dbReference type="RefSeq" id="WP_003406154.1">
    <property type="nucleotide sequence ID" value="NZ_KK341227.1"/>
</dbReference>
<dbReference type="SMR" id="P9WJN2"/>
<dbReference type="GeneID" id="45425142"/>
<dbReference type="KEGG" id="mtc:MT1207"/>
<dbReference type="PATRIC" id="fig|83331.31.peg.1307"/>
<dbReference type="HOGENOM" id="CLU_049311_2_1_11"/>
<dbReference type="Proteomes" id="UP000001020">
    <property type="component" value="Chromosome"/>
</dbReference>
<dbReference type="GO" id="GO:0035595">
    <property type="term" value="F:N-acetylglucosaminylinositol deacetylase activity"/>
    <property type="evidence" value="ECO:0007669"/>
    <property type="project" value="UniProtKB-EC"/>
</dbReference>
<dbReference type="GO" id="GO:0008270">
    <property type="term" value="F:zinc ion binding"/>
    <property type="evidence" value="ECO:0007669"/>
    <property type="project" value="UniProtKB-UniRule"/>
</dbReference>
<dbReference type="GO" id="GO:0010125">
    <property type="term" value="P:mycothiol biosynthetic process"/>
    <property type="evidence" value="ECO:0007669"/>
    <property type="project" value="UniProtKB-UniRule"/>
</dbReference>
<dbReference type="Gene3D" id="3.40.50.10320">
    <property type="entry name" value="LmbE-like"/>
    <property type="match status" value="1"/>
</dbReference>
<dbReference type="HAMAP" id="MF_01696">
    <property type="entry name" value="MshB"/>
    <property type="match status" value="1"/>
</dbReference>
<dbReference type="InterPro" id="IPR003737">
    <property type="entry name" value="GlcNAc_PI_deacetylase-related"/>
</dbReference>
<dbReference type="InterPro" id="IPR024078">
    <property type="entry name" value="LmbE-like_dom_sf"/>
</dbReference>
<dbReference type="InterPro" id="IPR017810">
    <property type="entry name" value="Mycothiol_biosynthesis_MshB"/>
</dbReference>
<dbReference type="NCBIfam" id="TIGR03445">
    <property type="entry name" value="mycothiol_MshB"/>
    <property type="match status" value="1"/>
</dbReference>
<dbReference type="PANTHER" id="PTHR12993:SF26">
    <property type="entry name" value="1D-MYO-INOSITOL 2-ACETAMIDO-2-DEOXY-ALPHA-D-GLUCOPYRANOSIDE DEACETYLASE"/>
    <property type="match status" value="1"/>
</dbReference>
<dbReference type="PANTHER" id="PTHR12993">
    <property type="entry name" value="N-ACETYLGLUCOSAMINYL-PHOSPHATIDYLINOSITOL DE-N-ACETYLASE-RELATED"/>
    <property type="match status" value="1"/>
</dbReference>
<dbReference type="Pfam" id="PF02585">
    <property type="entry name" value="PIG-L"/>
    <property type="match status" value="1"/>
</dbReference>
<dbReference type="SUPFAM" id="SSF102588">
    <property type="entry name" value="LmbE-like"/>
    <property type="match status" value="1"/>
</dbReference>
<proteinExistence type="inferred from homology"/>
<name>MSHB_MYCTO</name>
<gene>
    <name type="primary">mshB</name>
    <name type="ordered locus">MT1207</name>
</gene>
<protein>
    <recommendedName>
        <fullName>1D-myo-inositol 2-acetamido-2-deoxy-alpha-D-glucopyranoside deacetylase</fullName>
        <shortName>GlcNAc-Ins deacetylase</shortName>
        <ecNumber>3.5.1.103</ecNumber>
    </recommendedName>
    <alternativeName>
        <fullName>N-acetyl-1-D-myo-inositol 2-amino-2-deoxy-alpha-D-glucopyranoside deacetylase</fullName>
    </alternativeName>
</protein>
<feature type="chain" id="PRO_0000427800" description="1D-myo-inositol 2-acetamido-2-deoxy-alpha-D-glucopyranoside deacetylase">
    <location>
        <begin position="1"/>
        <end position="303"/>
    </location>
</feature>
<feature type="binding site" evidence="1">
    <location>
        <position position="13"/>
    </location>
    <ligand>
        <name>Zn(2+)</name>
        <dbReference type="ChEBI" id="CHEBI:29105"/>
    </ligand>
</feature>
<feature type="binding site" evidence="1">
    <location>
        <position position="16"/>
    </location>
    <ligand>
        <name>Zn(2+)</name>
        <dbReference type="ChEBI" id="CHEBI:29105"/>
    </ligand>
</feature>
<feature type="binding site" evidence="1">
    <location>
        <position position="147"/>
    </location>
    <ligand>
        <name>Zn(2+)</name>
        <dbReference type="ChEBI" id="CHEBI:29105"/>
    </ligand>
</feature>